<sequence length="433" mass="47897">MKPNLNHRSNEPNCKGVEILSIGTELLLGNIVNTNAQWISEELSALGLNHFRQSTIGDNSKRISNLIKEISLRSDLLITTGGLGPTPDDLTTEAIAKSFNVTLYERESLWDEIKKKLSLSSSIQNNSSLKKQCFFPKDAQIIHNPRGTAPGMIWKPKKGFTILTFPGVPSEMKVMWKETAIDYIQKNFSDGYIFFSNTLNFSGIGESKVSEKIDNLLKLKNPTVAPYANLGELKLRITARATNELQAKNLIKPVKEELKKEFSKFIFGEDNETLSSVLIKELLKRKESLGFAESCTGGLLSSTITKVSGSSQVFKGSIISYSNELKQSLLNIPEDRIKKYGAVSEEIAQDMTINAREKLNSDWSIAISGIAGPSGGSKEKPVGIVYISIAGPNNHITNIKKIFSSTRNRVEIQRLSVNVCLNSLRLILLSKSK</sequence>
<name>CINAL_PROM5</name>
<comment type="similarity">
    <text evidence="1">Belongs to the CinA family.</text>
</comment>
<evidence type="ECO:0000255" key="1">
    <source>
        <dbReference type="HAMAP-Rule" id="MF_00226"/>
    </source>
</evidence>
<accession>A2BUN8</accession>
<dbReference type="EMBL" id="CP000552">
    <property type="protein sequence ID" value="ABM71499.1"/>
    <property type="molecule type" value="Genomic_DNA"/>
</dbReference>
<dbReference type="RefSeq" id="WP_011819609.1">
    <property type="nucleotide sequence ID" value="NC_008817.1"/>
</dbReference>
<dbReference type="SMR" id="A2BUN8"/>
<dbReference type="STRING" id="167542.P9515_02901"/>
<dbReference type="GeneID" id="60201555"/>
<dbReference type="KEGG" id="pmc:P9515_02901"/>
<dbReference type="eggNOG" id="COG1058">
    <property type="taxonomic scope" value="Bacteria"/>
</dbReference>
<dbReference type="eggNOG" id="COG1546">
    <property type="taxonomic scope" value="Bacteria"/>
</dbReference>
<dbReference type="HOGENOM" id="CLU_030805_9_3_3"/>
<dbReference type="OrthoDB" id="9801454at2"/>
<dbReference type="Proteomes" id="UP000001589">
    <property type="component" value="Chromosome"/>
</dbReference>
<dbReference type="CDD" id="cd00885">
    <property type="entry name" value="cinA"/>
    <property type="match status" value="1"/>
</dbReference>
<dbReference type="Gene3D" id="3.30.70.2860">
    <property type="match status" value="1"/>
</dbReference>
<dbReference type="Gene3D" id="3.90.950.20">
    <property type="entry name" value="CinA-like"/>
    <property type="match status" value="1"/>
</dbReference>
<dbReference type="Gene3D" id="3.40.980.10">
    <property type="entry name" value="MoaB/Mog-like domain"/>
    <property type="match status" value="1"/>
</dbReference>
<dbReference type="HAMAP" id="MF_00226_B">
    <property type="entry name" value="CinA_B"/>
    <property type="match status" value="1"/>
</dbReference>
<dbReference type="InterPro" id="IPR050101">
    <property type="entry name" value="CinA"/>
</dbReference>
<dbReference type="InterPro" id="IPR036653">
    <property type="entry name" value="CinA-like_C"/>
</dbReference>
<dbReference type="InterPro" id="IPR008136">
    <property type="entry name" value="CinA_C"/>
</dbReference>
<dbReference type="InterPro" id="IPR041424">
    <property type="entry name" value="CinA_KH"/>
</dbReference>
<dbReference type="InterPro" id="IPR008135">
    <property type="entry name" value="Competence-induced_CinA"/>
</dbReference>
<dbReference type="InterPro" id="IPR036425">
    <property type="entry name" value="MoaB/Mog-like_dom_sf"/>
</dbReference>
<dbReference type="InterPro" id="IPR001453">
    <property type="entry name" value="MoaB/Mog_dom"/>
</dbReference>
<dbReference type="NCBIfam" id="TIGR00200">
    <property type="entry name" value="cinA_nterm"/>
    <property type="match status" value="1"/>
</dbReference>
<dbReference type="NCBIfam" id="TIGR00177">
    <property type="entry name" value="molyb_syn"/>
    <property type="match status" value="1"/>
</dbReference>
<dbReference type="NCBIfam" id="TIGR00199">
    <property type="entry name" value="PncC_domain"/>
    <property type="match status" value="1"/>
</dbReference>
<dbReference type="NCBIfam" id="NF001813">
    <property type="entry name" value="PRK00549.1"/>
    <property type="match status" value="1"/>
</dbReference>
<dbReference type="PANTHER" id="PTHR13939">
    <property type="entry name" value="NICOTINAMIDE-NUCLEOTIDE AMIDOHYDROLASE PNCC"/>
    <property type="match status" value="1"/>
</dbReference>
<dbReference type="PANTHER" id="PTHR13939:SF0">
    <property type="entry name" value="NMN AMIDOHYDROLASE-LIKE PROTEIN YFAY"/>
    <property type="match status" value="1"/>
</dbReference>
<dbReference type="Pfam" id="PF02464">
    <property type="entry name" value="CinA"/>
    <property type="match status" value="1"/>
</dbReference>
<dbReference type="Pfam" id="PF18146">
    <property type="entry name" value="CinA_KH"/>
    <property type="match status" value="1"/>
</dbReference>
<dbReference type="Pfam" id="PF00994">
    <property type="entry name" value="MoCF_biosynth"/>
    <property type="match status" value="1"/>
</dbReference>
<dbReference type="PIRSF" id="PIRSF006728">
    <property type="entry name" value="CinA"/>
    <property type="match status" value="1"/>
</dbReference>
<dbReference type="SMART" id="SM00852">
    <property type="entry name" value="MoCF_biosynth"/>
    <property type="match status" value="1"/>
</dbReference>
<dbReference type="SUPFAM" id="SSF142433">
    <property type="entry name" value="CinA-like"/>
    <property type="match status" value="1"/>
</dbReference>
<dbReference type="SUPFAM" id="SSF53218">
    <property type="entry name" value="Molybdenum cofactor biosynthesis proteins"/>
    <property type="match status" value="1"/>
</dbReference>
<organism>
    <name type="scientific">Prochlorococcus marinus (strain MIT 9515)</name>
    <dbReference type="NCBI Taxonomy" id="167542"/>
    <lineage>
        <taxon>Bacteria</taxon>
        <taxon>Bacillati</taxon>
        <taxon>Cyanobacteriota</taxon>
        <taxon>Cyanophyceae</taxon>
        <taxon>Synechococcales</taxon>
        <taxon>Prochlorococcaceae</taxon>
        <taxon>Prochlorococcus</taxon>
    </lineage>
</organism>
<proteinExistence type="inferred from homology"/>
<reference key="1">
    <citation type="journal article" date="2007" name="PLoS Genet.">
        <title>Patterns and implications of gene gain and loss in the evolution of Prochlorococcus.</title>
        <authorList>
            <person name="Kettler G.C."/>
            <person name="Martiny A.C."/>
            <person name="Huang K."/>
            <person name="Zucker J."/>
            <person name="Coleman M.L."/>
            <person name="Rodrigue S."/>
            <person name="Chen F."/>
            <person name="Lapidus A."/>
            <person name="Ferriera S."/>
            <person name="Johnson J."/>
            <person name="Steglich C."/>
            <person name="Church G.M."/>
            <person name="Richardson P."/>
            <person name="Chisholm S.W."/>
        </authorList>
    </citation>
    <scope>NUCLEOTIDE SEQUENCE [LARGE SCALE GENOMIC DNA]</scope>
    <source>
        <strain>MIT 9515</strain>
    </source>
</reference>
<gene>
    <name type="ordered locus">P9515_02901</name>
</gene>
<protein>
    <recommendedName>
        <fullName evidence="1">CinA-like protein</fullName>
    </recommendedName>
</protein>
<feature type="chain" id="PRO_1000058720" description="CinA-like protein">
    <location>
        <begin position="1"/>
        <end position="433"/>
    </location>
</feature>